<proteinExistence type="inferred from homology"/>
<protein>
    <recommendedName>
        <fullName evidence="1">Histidine biosynthesis bifunctional protein HisB</fullName>
    </recommendedName>
    <domain>
        <recommendedName>
            <fullName evidence="1">Histidinol-phosphatase</fullName>
            <ecNumber evidence="1">3.1.3.15</ecNumber>
        </recommendedName>
    </domain>
    <domain>
        <recommendedName>
            <fullName evidence="1">Imidazoleglycerol-phosphate dehydratase</fullName>
            <shortName evidence="1">IGPD</shortName>
            <ecNumber evidence="1">4.2.1.19</ecNumber>
        </recommendedName>
    </domain>
</protein>
<sequence length="352" mass="39608">MSQKILFIDRDGTLIEEPKSDFQIDTLEKLRFEKDAIPTLLKLKNFGFKFVMVSNQDGLGTPSFPKENFEIAHEKMLDILKSCGIEFQDIFICPHFENENCACRKPKTAMLEEYIKHELYDKEQSFVIGDRESDMILASNLGVRGLRYGELSWKEIENEILSSFRSASYQRTTKETDIKVKVCLNGGKISIKTGIDFFDHMLEQIAVHGGIGLEISCKGDLEIDEHHSVEDVALALGACIKKALGDKIGIARYGFALPMDECLASCAMDFCNRPHLVYKAKFKKSHLGALSTEMIEHFFYSLSYAMGVSLHLKVKGKNDHHKAEGLFKAFAKALKMAVKIESENLASSKGVI</sequence>
<organism>
    <name type="scientific">Campylobacter jejuni subsp. jejuni serotype O:23/36 (strain 81-176)</name>
    <dbReference type="NCBI Taxonomy" id="354242"/>
    <lineage>
        <taxon>Bacteria</taxon>
        <taxon>Pseudomonadati</taxon>
        <taxon>Campylobacterota</taxon>
        <taxon>Epsilonproteobacteria</taxon>
        <taxon>Campylobacterales</taxon>
        <taxon>Campylobacteraceae</taxon>
        <taxon>Campylobacter</taxon>
    </lineage>
</organism>
<accession>A1W1K1</accession>
<evidence type="ECO:0000255" key="1">
    <source>
        <dbReference type="HAMAP-Rule" id="MF_01022"/>
    </source>
</evidence>
<keyword id="KW-0028">Amino-acid biosynthesis</keyword>
<keyword id="KW-0963">Cytoplasm</keyword>
<keyword id="KW-0368">Histidine biosynthesis</keyword>
<keyword id="KW-0378">Hydrolase</keyword>
<keyword id="KW-0456">Lyase</keyword>
<keyword id="KW-0460">Magnesium</keyword>
<keyword id="KW-0479">Metal-binding</keyword>
<keyword id="KW-0511">Multifunctional enzyme</keyword>
<keyword id="KW-0862">Zinc</keyword>
<reference key="1">
    <citation type="submission" date="2006-12" db="EMBL/GenBank/DDBJ databases">
        <authorList>
            <person name="Fouts D.E."/>
            <person name="Nelson K.E."/>
            <person name="Sebastian Y."/>
        </authorList>
    </citation>
    <scope>NUCLEOTIDE SEQUENCE [LARGE SCALE GENOMIC DNA]</scope>
    <source>
        <strain>81-176</strain>
    </source>
</reference>
<gene>
    <name evidence="1" type="primary">hisB</name>
    <name type="ordered locus">CJJ81176_1586</name>
</gene>
<name>HIS7_CAMJJ</name>
<comment type="catalytic activity">
    <reaction evidence="1">
        <text>D-erythro-1-(imidazol-4-yl)glycerol 3-phosphate = 3-(imidazol-4-yl)-2-oxopropyl phosphate + H2O</text>
        <dbReference type="Rhea" id="RHEA:11040"/>
        <dbReference type="ChEBI" id="CHEBI:15377"/>
        <dbReference type="ChEBI" id="CHEBI:57766"/>
        <dbReference type="ChEBI" id="CHEBI:58278"/>
        <dbReference type="EC" id="4.2.1.19"/>
    </reaction>
</comment>
<comment type="catalytic activity">
    <reaction evidence="1">
        <text>L-histidinol phosphate + H2O = L-histidinol + phosphate</text>
        <dbReference type="Rhea" id="RHEA:14465"/>
        <dbReference type="ChEBI" id="CHEBI:15377"/>
        <dbReference type="ChEBI" id="CHEBI:43474"/>
        <dbReference type="ChEBI" id="CHEBI:57699"/>
        <dbReference type="ChEBI" id="CHEBI:57980"/>
        <dbReference type="EC" id="3.1.3.15"/>
    </reaction>
</comment>
<comment type="cofactor">
    <cofactor evidence="1">
        <name>Mg(2+)</name>
        <dbReference type="ChEBI" id="CHEBI:18420"/>
    </cofactor>
</comment>
<comment type="cofactor">
    <cofactor evidence="1">
        <name>Zn(2+)</name>
        <dbReference type="ChEBI" id="CHEBI:29105"/>
    </cofactor>
</comment>
<comment type="pathway">
    <text evidence="1">Amino-acid biosynthesis; L-histidine biosynthesis; L-histidine from 5-phospho-alpha-D-ribose 1-diphosphate: step 6/9.</text>
</comment>
<comment type="pathway">
    <text evidence="1">Amino-acid biosynthesis; L-histidine biosynthesis; L-histidine from 5-phospho-alpha-D-ribose 1-diphosphate: step 8/9.</text>
</comment>
<comment type="subcellular location">
    <subcellularLocation>
        <location evidence="1">Cytoplasm</location>
    </subcellularLocation>
</comment>
<comment type="similarity">
    <text evidence="1">In the N-terminal section; belongs to the histidinol-phosphatase family.</text>
</comment>
<comment type="similarity">
    <text evidence="1">In the C-terminal section; belongs to the imidazoleglycerol-phosphate dehydratase family.</text>
</comment>
<dbReference type="EC" id="3.1.3.15" evidence="1"/>
<dbReference type="EC" id="4.2.1.19" evidence="1"/>
<dbReference type="EMBL" id="CP000538">
    <property type="protein sequence ID" value="EAQ72599.1"/>
    <property type="molecule type" value="Genomic_DNA"/>
</dbReference>
<dbReference type="RefSeq" id="WP_002855951.1">
    <property type="nucleotide sequence ID" value="NC_008787.1"/>
</dbReference>
<dbReference type="SMR" id="A1W1K1"/>
<dbReference type="KEGG" id="cjj:CJJ81176_1586"/>
<dbReference type="eggNOG" id="COG0131">
    <property type="taxonomic scope" value="Bacteria"/>
</dbReference>
<dbReference type="eggNOG" id="COG0241">
    <property type="taxonomic scope" value="Bacteria"/>
</dbReference>
<dbReference type="HOGENOM" id="CLU_044308_0_0_7"/>
<dbReference type="UniPathway" id="UPA00031">
    <property type="reaction ID" value="UER00011"/>
</dbReference>
<dbReference type="UniPathway" id="UPA00031">
    <property type="reaction ID" value="UER00013"/>
</dbReference>
<dbReference type="Proteomes" id="UP000000646">
    <property type="component" value="Chromosome"/>
</dbReference>
<dbReference type="GO" id="GO:0005737">
    <property type="term" value="C:cytoplasm"/>
    <property type="evidence" value="ECO:0007669"/>
    <property type="project" value="UniProtKB-SubCell"/>
</dbReference>
<dbReference type="GO" id="GO:0004401">
    <property type="term" value="F:histidinol-phosphatase activity"/>
    <property type="evidence" value="ECO:0007669"/>
    <property type="project" value="UniProtKB-UniRule"/>
</dbReference>
<dbReference type="GO" id="GO:0004424">
    <property type="term" value="F:imidazoleglycerol-phosphate dehydratase activity"/>
    <property type="evidence" value="ECO:0007669"/>
    <property type="project" value="UniProtKB-UniRule"/>
</dbReference>
<dbReference type="GO" id="GO:0046872">
    <property type="term" value="F:metal ion binding"/>
    <property type="evidence" value="ECO:0007669"/>
    <property type="project" value="UniProtKB-KW"/>
</dbReference>
<dbReference type="GO" id="GO:0000105">
    <property type="term" value="P:L-histidine biosynthetic process"/>
    <property type="evidence" value="ECO:0007669"/>
    <property type="project" value="UniProtKB-UniRule"/>
</dbReference>
<dbReference type="CDD" id="cd07503">
    <property type="entry name" value="HAD_HisB-N"/>
    <property type="match status" value="1"/>
</dbReference>
<dbReference type="CDD" id="cd07914">
    <property type="entry name" value="IGPD"/>
    <property type="match status" value="1"/>
</dbReference>
<dbReference type="FunFam" id="3.40.50.1000:FF:000061">
    <property type="entry name" value="Histidine biosynthesis bifunctional protein HisB"/>
    <property type="match status" value="1"/>
</dbReference>
<dbReference type="FunFam" id="3.30.230.40:FF:000001">
    <property type="entry name" value="Imidazoleglycerol-phosphate dehydratase HisB"/>
    <property type="match status" value="1"/>
</dbReference>
<dbReference type="FunFam" id="3.30.230.40:FF:000003">
    <property type="entry name" value="Imidazoleglycerol-phosphate dehydratase HisB"/>
    <property type="match status" value="1"/>
</dbReference>
<dbReference type="Gene3D" id="3.40.50.1000">
    <property type="entry name" value="HAD superfamily/HAD-like"/>
    <property type="match status" value="1"/>
</dbReference>
<dbReference type="Gene3D" id="3.30.230.40">
    <property type="entry name" value="Imidazole glycerol phosphate dehydratase, domain 1"/>
    <property type="match status" value="2"/>
</dbReference>
<dbReference type="HAMAP" id="MF_01022">
    <property type="entry name" value="Bifunc_HisB"/>
    <property type="match status" value="1"/>
</dbReference>
<dbReference type="HAMAP" id="MF_00076">
    <property type="entry name" value="HisB"/>
    <property type="match status" value="1"/>
</dbReference>
<dbReference type="InterPro" id="IPR036412">
    <property type="entry name" value="HAD-like_sf"/>
</dbReference>
<dbReference type="InterPro" id="IPR006549">
    <property type="entry name" value="HAD-SF_hydro_IIIA"/>
</dbReference>
<dbReference type="InterPro" id="IPR023214">
    <property type="entry name" value="HAD_sf"/>
</dbReference>
<dbReference type="InterPro" id="IPR020566">
    <property type="entry name" value="His_synth_bifunc_HisB"/>
</dbReference>
<dbReference type="InterPro" id="IPR005954">
    <property type="entry name" value="HisB_N"/>
</dbReference>
<dbReference type="InterPro" id="IPR006543">
    <property type="entry name" value="Histidinol-phos"/>
</dbReference>
<dbReference type="InterPro" id="IPR038494">
    <property type="entry name" value="IGPD_sf"/>
</dbReference>
<dbReference type="InterPro" id="IPR000807">
    <property type="entry name" value="ImidazoleglycerolP_deHydtase"/>
</dbReference>
<dbReference type="InterPro" id="IPR020565">
    <property type="entry name" value="ImidazoleglycerP_deHydtase_CS"/>
</dbReference>
<dbReference type="InterPro" id="IPR013954">
    <property type="entry name" value="PNK3P"/>
</dbReference>
<dbReference type="InterPro" id="IPR020568">
    <property type="entry name" value="Ribosomal_Su5_D2-typ_SF"/>
</dbReference>
<dbReference type="NCBIfam" id="TIGR01662">
    <property type="entry name" value="HAD-SF-IIIA"/>
    <property type="match status" value="1"/>
</dbReference>
<dbReference type="NCBIfam" id="TIGR01261">
    <property type="entry name" value="hisB_Nterm"/>
    <property type="match status" value="1"/>
</dbReference>
<dbReference type="NCBIfam" id="TIGR01656">
    <property type="entry name" value="Histidinol-ppas"/>
    <property type="match status" value="1"/>
</dbReference>
<dbReference type="NCBIfam" id="NF002111">
    <property type="entry name" value="PRK00951.2-1"/>
    <property type="match status" value="1"/>
</dbReference>
<dbReference type="NCBIfam" id="NF003937">
    <property type="entry name" value="PRK05446.1"/>
    <property type="match status" value="1"/>
</dbReference>
<dbReference type="PANTHER" id="PTHR23133:SF2">
    <property type="entry name" value="IMIDAZOLEGLYCEROL-PHOSPHATE DEHYDRATASE"/>
    <property type="match status" value="1"/>
</dbReference>
<dbReference type="PANTHER" id="PTHR23133">
    <property type="entry name" value="IMIDAZOLEGLYCEROL-PHOSPHATE DEHYDRATASE HIS7"/>
    <property type="match status" value="1"/>
</dbReference>
<dbReference type="Pfam" id="PF00475">
    <property type="entry name" value="IGPD"/>
    <property type="match status" value="1"/>
</dbReference>
<dbReference type="Pfam" id="PF08645">
    <property type="entry name" value="PNK3P"/>
    <property type="match status" value="1"/>
</dbReference>
<dbReference type="SUPFAM" id="SSF56784">
    <property type="entry name" value="HAD-like"/>
    <property type="match status" value="1"/>
</dbReference>
<dbReference type="SUPFAM" id="SSF54211">
    <property type="entry name" value="Ribosomal protein S5 domain 2-like"/>
    <property type="match status" value="2"/>
</dbReference>
<dbReference type="PROSITE" id="PS00954">
    <property type="entry name" value="IGP_DEHYDRATASE_1"/>
    <property type="match status" value="1"/>
</dbReference>
<dbReference type="PROSITE" id="PS00955">
    <property type="entry name" value="IGP_DEHYDRATASE_2"/>
    <property type="match status" value="1"/>
</dbReference>
<feature type="chain" id="PRO_1000063443" description="Histidine biosynthesis bifunctional protein HisB">
    <location>
        <begin position="1"/>
        <end position="352"/>
    </location>
</feature>
<feature type="region of interest" description="Histidinol-phosphatase" evidence="1">
    <location>
        <begin position="1"/>
        <end position="164"/>
    </location>
</feature>
<feature type="region of interest" description="Imidazoleglycerol-phosphate dehydratase" evidence="1">
    <location>
        <begin position="165"/>
        <end position="352"/>
    </location>
</feature>
<feature type="active site" description="Nucleophile" evidence="1">
    <location>
        <position position="9"/>
    </location>
</feature>
<feature type="active site" description="Proton donor" evidence="1">
    <location>
        <position position="11"/>
    </location>
</feature>
<feature type="binding site" evidence="1">
    <location>
        <position position="9"/>
    </location>
    <ligand>
        <name>Mg(2+)</name>
        <dbReference type="ChEBI" id="CHEBI:18420"/>
    </ligand>
</feature>
<feature type="binding site" evidence="1">
    <location>
        <position position="11"/>
    </location>
    <ligand>
        <name>Mg(2+)</name>
        <dbReference type="ChEBI" id="CHEBI:18420"/>
    </ligand>
</feature>
<feature type="binding site" evidence="1">
    <location>
        <position position="93"/>
    </location>
    <ligand>
        <name>Zn(2+)</name>
        <dbReference type="ChEBI" id="CHEBI:29105"/>
    </ligand>
</feature>
<feature type="binding site" evidence="1">
    <location>
        <position position="95"/>
    </location>
    <ligand>
        <name>Zn(2+)</name>
        <dbReference type="ChEBI" id="CHEBI:29105"/>
    </ligand>
</feature>
<feature type="binding site" evidence="1">
    <location>
        <position position="101"/>
    </location>
    <ligand>
        <name>Zn(2+)</name>
        <dbReference type="ChEBI" id="CHEBI:29105"/>
    </ligand>
</feature>
<feature type="binding site" evidence="1">
    <location>
        <position position="103"/>
    </location>
    <ligand>
        <name>Zn(2+)</name>
        <dbReference type="ChEBI" id="CHEBI:29105"/>
    </ligand>
</feature>
<feature type="binding site" evidence="1">
    <location>
        <position position="130"/>
    </location>
    <ligand>
        <name>Mg(2+)</name>
        <dbReference type="ChEBI" id="CHEBI:18420"/>
    </ligand>
</feature>